<gene>
    <name evidence="14" type="primary">sad-1</name>
    <name type="ORF">F15A2.6</name>
</gene>
<sequence length="914" mass="100840">MFEALKEVLGEINSKLAAVNNELSSKIMSENIVSTRPVAQAQYCGPYKLEKTLGKGQTGLVKTGTHCITGRKVAIKIVNKEKLSESVLQKVEREIAIMKLIEHPHVLHLYDVYENKKYLYLLLEHVSGGELFDYLVRKGRLMSKEARKFFRQIISALDFCHAHNICHRDLKPENLLLDERNNIKVADFGMASLQVEGSMLETSCGSPHYACPEVIRGEKYDGRKADVWSCGVILYALLVGALPFDDDNLRNLLEKVKRGVFHIPHFVPADVQSLLRAMIEVDPGKRYSLADVFKHPWVSGTTKADPELELPMSQVVQTHVIPGEDSIDPDVLRHMNCLGCFKDKQKLINELLSPKHNTEKMVYFLLLDRKRRRPAQEDDTEIVLRGAAQNNDPPKKRTDSSRTSRYPMGSIADGSPINPRKTYGRNQKSGRHSSLGGSPTESPRSSTRDLFGSSSSGSYSARAGEDRDRGRSASRSTNSYHYYTQPVDPQTLAEAARHVRDAQERRESRDSGRGSSRKESKDRSDKSASSSSCKNDASSTSSVPHKYSPPSVMSESVVVSSSTMNSTNSSTNSLIAGNSQTSIGSTSGPWRSKLNNIKNSFLGTPRFHRRKMSNGTAESDSEDSQMIDTTDLVKKSWFGSLASSMSVERDDTHCVPVQGKTLNSIKAELIRAFLQIHELSHSVVGQNCFRVEYKRGPTVGGSVFSRGIKMNVDIIPSPQQVVIAGETPTYVVQFVLLAGPVRRFKRLVEHLSAILQNSTQQRADRQQQAALMVRPRRLSDSSVGSACSDSESNASSINMIARHSDKTETTSATSSDPYGPSPSMRSVGSGTANSYKSPTPHRRNTTAVTASSSSASNRYGPSSSSSGSYSNNADYSYHPEYSQRSNGSSAPKNQYSPGSQRSFAFSMFNKADKV</sequence>
<accession>Q19469</accession>
<accession>A3FPL0</accession>
<accession>Q9BMN6</accession>
<name>SAD1_CAEEL</name>
<comment type="function">
    <text evidence="5 6 7">Regulates both neuronal polarity and synaptic organization when bound to strd-1. Kinase activity is required for the establishment, but not the maintenance, of both processes. Binding to nab-1 is essential for role in restricting axonal fate during neuronal polarization but is not required for regulating synapse morphology.</text>
</comment>
<comment type="catalytic activity">
    <reaction evidence="7">
        <text>L-seryl-[protein] + ATP = O-phospho-L-seryl-[protein] + ADP + H(+)</text>
        <dbReference type="Rhea" id="RHEA:17989"/>
        <dbReference type="Rhea" id="RHEA-COMP:9863"/>
        <dbReference type="Rhea" id="RHEA-COMP:11604"/>
        <dbReference type="ChEBI" id="CHEBI:15378"/>
        <dbReference type="ChEBI" id="CHEBI:29999"/>
        <dbReference type="ChEBI" id="CHEBI:30616"/>
        <dbReference type="ChEBI" id="CHEBI:83421"/>
        <dbReference type="ChEBI" id="CHEBI:456216"/>
        <dbReference type="EC" id="2.7.11.1"/>
    </reaction>
</comment>
<comment type="catalytic activity">
    <reaction evidence="7">
        <text>L-threonyl-[protein] + ATP = O-phospho-L-threonyl-[protein] + ADP + H(+)</text>
        <dbReference type="Rhea" id="RHEA:46608"/>
        <dbReference type="Rhea" id="RHEA-COMP:11060"/>
        <dbReference type="Rhea" id="RHEA-COMP:11605"/>
        <dbReference type="ChEBI" id="CHEBI:15378"/>
        <dbReference type="ChEBI" id="CHEBI:30013"/>
        <dbReference type="ChEBI" id="CHEBI:30616"/>
        <dbReference type="ChEBI" id="CHEBI:61977"/>
        <dbReference type="ChEBI" id="CHEBI:456216"/>
        <dbReference type="EC" id="2.7.11.1"/>
    </reaction>
</comment>
<comment type="cofactor">
    <cofactor evidence="7">
        <name>Mg(2+)</name>
        <dbReference type="ChEBI" id="CHEBI:18420"/>
    </cofactor>
</comment>
<comment type="subunit">
    <text evidence="6 7">Interacts with strd-1 and nab-1.</text>
</comment>
<comment type="subcellular location">
    <subcellularLocation>
        <location evidence="7">Synapse</location>
    </subcellularLocation>
    <text evidence="7">Synapse localization is regulated by strd-1. Co-localizes with strd-1 in synapses.</text>
</comment>
<comment type="alternative products">
    <event type="alternative splicing"/>
    <isoform>
        <id>Q19469-1</id>
        <name evidence="5 6 8">a</name>
        <sequence type="displayed"/>
    </isoform>
    <isoform>
        <id>Q19469-2</id>
        <name evidence="6 8">b</name>
        <sequence type="described" ref="VSP_039684 VSP_039685"/>
    </isoform>
</comment>
<comment type="tissue specificity">
    <text evidence="5 7">Expressed in neurons. Colocalizes with strd-1 along the dorsal nerve cord.</text>
</comment>
<comment type="disruption phenotype">
    <text evidence="5 6">Pre-synaptic vesicle and active zone proteins fail to be restricted to the axons of motor and sensory neurons. Synaptic vesicles fail to form tight clusters implying aberrant synaptic organization in addition to defects in neuronal polarity. Overexpression causes mislocalization of vesicle proteins to dendrites.</text>
</comment>
<comment type="similarity">
    <text evidence="11">Belongs to the protein kinase superfamily. CAMK Ser/Thr protein kinase family. SNF1 subfamily.</text>
</comment>
<dbReference type="EC" id="2.7.11.1"/>
<dbReference type="EMBL" id="AF316542">
    <property type="protein sequence ID" value="AAG50270.1"/>
    <property type="molecule type" value="mRNA"/>
</dbReference>
<dbReference type="EMBL" id="Z70207">
    <property type="protein sequence ID" value="CAA94127.2"/>
    <property type="molecule type" value="Genomic_DNA"/>
</dbReference>
<dbReference type="EMBL" id="Z70207">
    <property type="protein sequence ID" value="CAM33501.1"/>
    <property type="molecule type" value="Genomic_DNA"/>
</dbReference>
<dbReference type="PIR" id="T20941">
    <property type="entry name" value="T20941"/>
</dbReference>
<dbReference type="RefSeq" id="NP_001076760.1">
    <molecule id="Q19469-1"/>
    <property type="nucleotide sequence ID" value="NM_001083291.5"/>
</dbReference>
<dbReference type="RefSeq" id="NP_001076761.1">
    <molecule id="Q19469-2"/>
    <property type="nucleotide sequence ID" value="NM_001083292.4"/>
</dbReference>
<dbReference type="SMR" id="Q19469"/>
<dbReference type="BioGRID" id="46373">
    <property type="interactions" value="5"/>
</dbReference>
<dbReference type="FunCoup" id="Q19469">
    <property type="interactions" value="593"/>
</dbReference>
<dbReference type="STRING" id="6239.F15A2.6a.1"/>
<dbReference type="PaxDb" id="6239-F15A2.6a"/>
<dbReference type="PeptideAtlas" id="Q19469"/>
<dbReference type="EnsemblMetazoa" id="F15A2.6a.1">
    <molecule id="Q19469-1"/>
    <property type="protein sequence ID" value="F15A2.6a.1"/>
    <property type="gene ID" value="WBGene00004719"/>
</dbReference>
<dbReference type="EnsemblMetazoa" id="F15A2.6b.1">
    <molecule id="Q19469-2"/>
    <property type="protein sequence ID" value="F15A2.6b.1"/>
    <property type="gene ID" value="WBGene00004719"/>
</dbReference>
<dbReference type="GeneID" id="181471"/>
<dbReference type="KEGG" id="cel:CELE_F15A2.6"/>
<dbReference type="UCSC" id="F15A2.6a">
    <property type="organism name" value="c. elegans"/>
</dbReference>
<dbReference type="AGR" id="WB:WBGene00004719"/>
<dbReference type="CTD" id="181471"/>
<dbReference type="WormBase" id="F15A2.6a">
    <molecule id="Q19469-1"/>
    <property type="protein sequence ID" value="CE28218"/>
    <property type="gene ID" value="WBGene00004719"/>
    <property type="gene designation" value="sad-1"/>
</dbReference>
<dbReference type="WormBase" id="F15A2.6b">
    <molecule id="Q19469-2"/>
    <property type="protein sequence ID" value="CE40646"/>
    <property type="gene ID" value="WBGene00004719"/>
    <property type="gene designation" value="sad-1"/>
</dbReference>
<dbReference type="eggNOG" id="KOG0588">
    <property type="taxonomic scope" value="Eukaryota"/>
</dbReference>
<dbReference type="GeneTree" id="ENSGT00940000166887"/>
<dbReference type="HOGENOM" id="CLU_000288_156_1_1"/>
<dbReference type="InParanoid" id="Q19469"/>
<dbReference type="OMA" id="DTHCVPV"/>
<dbReference type="OrthoDB" id="193931at2759"/>
<dbReference type="PhylomeDB" id="Q19469"/>
<dbReference type="PRO" id="PR:Q19469"/>
<dbReference type="Proteomes" id="UP000001940">
    <property type="component" value="Chromosome X"/>
</dbReference>
<dbReference type="Bgee" id="WBGene00004719">
    <property type="expression patterns" value="Expressed in pharyngeal muscle cell (C elegans) and 3 other cell types or tissues"/>
</dbReference>
<dbReference type="GO" id="GO:0030424">
    <property type="term" value="C:axon"/>
    <property type="evidence" value="ECO:0000314"/>
    <property type="project" value="WormBase"/>
</dbReference>
<dbReference type="GO" id="GO:0030425">
    <property type="term" value="C:dendrite"/>
    <property type="evidence" value="ECO:0000314"/>
    <property type="project" value="WormBase"/>
</dbReference>
<dbReference type="GO" id="GO:0045202">
    <property type="term" value="C:synapse"/>
    <property type="evidence" value="ECO:0007669"/>
    <property type="project" value="UniProtKB-SubCell"/>
</dbReference>
<dbReference type="GO" id="GO:0005524">
    <property type="term" value="F:ATP binding"/>
    <property type="evidence" value="ECO:0007669"/>
    <property type="project" value="UniProtKB-KW"/>
</dbReference>
<dbReference type="GO" id="GO:0046872">
    <property type="term" value="F:metal ion binding"/>
    <property type="evidence" value="ECO:0007669"/>
    <property type="project" value="UniProtKB-KW"/>
</dbReference>
<dbReference type="GO" id="GO:0004672">
    <property type="term" value="F:protein kinase activity"/>
    <property type="evidence" value="ECO:0000314"/>
    <property type="project" value="WormBase"/>
</dbReference>
<dbReference type="GO" id="GO:0106310">
    <property type="term" value="F:protein serine kinase activity"/>
    <property type="evidence" value="ECO:0007669"/>
    <property type="project" value="RHEA"/>
</dbReference>
<dbReference type="GO" id="GO:0004674">
    <property type="term" value="F:protein serine/threonine kinase activity"/>
    <property type="evidence" value="ECO:0000314"/>
    <property type="project" value="WormBase"/>
</dbReference>
<dbReference type="GO" id="GO:0050321">
    <property type="term" value="F:tau-protein kinase activity"/>
    <property type="evidence" value="ECO:0000318"/>
    <property type="project" value="GO_Central"/>
</dbReference>
<dbReference type="GO" id="GO:0008088">
    <property type="term" value="P:axo-dendritic transport"/>
    <property type="evidence" value="ECO:0000316"/>
    <property type="project" value="WormBase"/>
</dbReference>
<dbReference type="GO" id="GO:0007411">
    <property type="term" value="P:axon guidance"/>
    <property type="evidence" value="ECO:0000315"/>
    <property type="project" value="WormBase"/>
</dbReference>
<dbReference type="GO" id="GO:0007409">
    <property type="term" value="P:axonogenesis"/>
    <property type="evidence" value="ECO:0000318"/>
    <property type="project" value="GO_Central"/>
</dbReference>
<dbReference type="GO" id="GO:0030010">
    <property type="term" value="P:establishment of cell polarity"/>
    <property type="evidence" value="ECO:0000318"/>
    <property type="project" value="GO_Central"/>
</dbReference>
<dbReference type="GO" id="GO:0007163">
    <property type="term" value="P:establishment or maintenance of cell polarity"/>
    <property type="evidence" value="ECO:0000315"/>
    <property type="project" value="WormBase"/>
</dbReference>
<dbReference type="GO" id="GO:0000086">
    <property type="term" value="P:G2/M transition of mitotic cell cycle"/>
    <property type="evidence" value="ECO:0000318"/>
    <property type="project" value="GO_Central"/>
</dbReference>
<dbReference type="GO" id="GO:0099172">
    <property type="term" value="P:presynapse organization"/>
    <property type="evidence" value="ECO:0000315"/>
    <property type="project" value="WormBase"/>
</dbReference>
<dbReference type="GO" id="GO:0008104">
    <property type="term" value="P:protein localization"/>
    <property type="evidence" value="ECO:0000316"/>
    <property type="project" value="WormBase"/>
</dbReference>
<dbReference type="GO" id="GO:0030516">
    <property type="term" value="P:regulation of axon extension"/>
    <property type="evidence" value="ECO:0000315"/>
    <property type="project" value="WormBase"/>
</dbReference>
<dbReference type="GO" id="GO:0007416">
    <property type="term" value="P:synapse assembly"/>
    <property type="evidence" value="ECO:0000315"/>
    <property type="project" value="WormBase"/>
</dbReference>
<dbReference type="GO" id="GO:0050808">
    <property type="term" value="P:synapse organization"/>
    <property type="evidence" value="ECO:0000315"/>
    <property type="project" value="WormBase"/>
</dbReference>
<dbReference type="GO" id="GO:0048489">
    <property type="term" value="P:synaptic vesicle transport"/>
    <property type="evidence" value="ECO:0000315"/>
    <property type="project" value="WormBase"/>
</dbReference>
<dbReference type="CDD" id="cd14081">
    <property type="entry name" value="STKc_BRSK1_2"/>
    <property type="match status" value="1"/>
</dbReference>
<dbReference type="CDD" id="cd14340">
    <property type="entry name" value="UBA_BRSK"/>
    <property type="match status" value="1"/>
</dbReference>
<dbReference type="FunFam" id="1.10.510.10:FF:000064">
    <property type="entry name" value="BR serine/threonine-protein kinase 2"/>
    <property type="match status" value="1"/>
</dbReference>
<dbReference type="FunFam" id="3.30.200.20:FF:000003">
    <property type="entry name" value="Non-specific serine/threonine protein kinase"/>
    <property type="match status" value="1"/>
</dbReference>
<dbReference type="Gene3D" id="1.10.510.10">
    <property type="entry name" value="Transferase(Phosphotransferase) domain 1"/>
    <property type="match status" value="1"/>
</dbReference>
<dbReference type="InterPro" id="IPR048622">
    <property type="entry name" value="BRSK1_2-like_UBA"/>
</dbReference>
<dbReference type="InterPro" id="IPR011009">
    <property type="entry name" value="Kinase-like_dom_sf"/>
</dbReference>
<dbReference type="InterPro" id="IPR000719">
    <property type="entry name" value="Prot_kinase_dom"/>
</dbReference>
<dbReference type="InterPro" id="IPR017441">
    <property type="entry name" value="Protein_kinase_ATP_BS"/>
</dbReference>
<dbReference type="InterPro" id="IPR008271">
    <property type="entry name" value="Ser/Thr_kinase_AS"/>
</dbReference>
<dbReference type="PANTHER" id="PTHR24346">
    <property type="entry name" value="MAP/MICROTUBULE AFFINITY-REGULATING KINASE"/>
    <property type="match status" value="1"/>
</dbReference>
<dbReference type="PANTHER" id="PTHR24346:SF36">
    <property type="entry name" value="SERINE_THREONINE-PROTEIN KINASE BRSK1 ISOFORM X1-RELATED"/>
    <property type="match status" value="1"/>
</dbReference>
<dbReference type="Pfam" id="PF21122">
    <property type="entry name" value="KA1_BRSK"/>
    <property type="match status" value="1"/>
</dbReference>
<dbReference type="Pfam" id="PF00069">
    <property type="entry name" value="Pkinase"/>
    <property type="match status" value="1"/>
</dbReference>
<dbReference type="Pfam" id="PF21115">
    <property type="entry name" value="UBA_BRSK"/>
    <property type="match status" value="1"/>
</dbReference>
<dbReference type="SMART" id="SM00220">
    <property type="entry name" value="S_TKc"/>
    <property type="match status" value="1"/>
</dbReference>
<dbReference type="SUPFAM" id="SSF56112">
    <property type="entry name" value="Protein kinase-like (PK-like)"/>
    <property type="match status" value="1"/>
</dbReference>
<dbReference type="PROSITE" id="PS00107">
    <property type="entry name" value="PROTEIN_KINASE_ATP"/>
    <property type="match status" value="1"/>
</dbReference>
<dbReference type="PROSITE" id="PS50011">
    <property type="entry name" value="PROTEIN_KINASE_DOM"/>
    <property type="match status" value="1"/>
</dbReference>
<dbReference type="PROSITE" id="PS00108">
    <property type="entry name" value="PROTEIN_KINASE_ST"/>
    <property type="match status" value="1"/>
</dbReference>
<reference evidence="11 12" key="1">
    <citation type="journal article" date="2001" name="Neuron">
        <title>The SAD-1 kinase regulates presynaptic vesicle clustering and axon termination.</title>
        <authorList>
            <person name="Crump J.G."/>
            <person name="Zhen M."/>
            <person name="Jin Y."/>
            <person name="Bargmann C.I."/>
        </authorList>
    </citation>
    <scope>NUCLEOTIDE SEQUENCE [MRNA] (ISOFORM A)</scope>
    <scope>FUNCTION</scope>
    <scope>TISSUE SPECIFICITY</scope>
    <scope>DISRUPTION PHENOTYPE</scope>
</reference>
<reference evidence="11" key="2">
    <citation type="journal article" date="2007" name="Development">
        <title>Neuronal polarity is regulated by a direct interaction between a scaffolding protein, Neurabin, and a presynaptic SAD-1 kinase in Caenorhabditis elegans.</title>
        <authorList>
            <person name="Hung W."/>
            <person name="Hwang C."/>
            <person name="Po M.D."/>
            <person name="Zhen M."/>
        </authorList>
    </citation>
    <scope>NUCLEOTIDE SEQUENCE [MRNA] (ISOFORMS A AND B)</scope>
    <scope>FUNCTION</scope>
    <scope>INTERACTION WITH NAB-1</scope>
    <scope>DISRUPTION PHENOTYPE</scope>
</reference>
<reference evidence="13" key="3">
    <citation type="journal article" date="1998" name="Science">
        <title>Genome sequence of the nematode C. elegans: a platform for investigating biology.</title>
        <authorList>
            <consortium name="The C. elegans sequencing consortium"/>
        </authorList>
    </citation>
    <scope>NUCLEOTIDE SEQUENCE [LARGE SCALE GENOMIC DNA]</scope>
    <scope>ALTERNATIVE SPLICING</scope>
    <source>
        <strain evidence="13">Bristol N2</strain>
    </source>
</reference>
<reference evidence="11" key="4">
    <citation type="journal article" date="2010" name="Development">
        <title>C. elegans STRADalpha and SAD cooperatively regulate neuronal polarity and synaptic organization.</title>
        <authorList>
            <person name="Kim J.S."/>
            <person name="Hung W."/>
            <person name="Narbonne P."/>
            <person name="Roy R."/>
            <person name="Zhen M."/>
        </authorList>
    </citation>
    <scope>FUNCTION</scope>
    <scope>INTERACTION WITH STRD-1</scope>
    <scope>SUBCELLULAR LOCATION</scope>
    <scope>TISSUE SPECIFICITY</scope>
</reference>
<keyword id="KW-0025">Alternative splicing</keyword>
<keyword id="KW-0067">ATP-binding</keyword>
<keyword id="KW-0418">Kinase</keyword>
<keyword id="KW-0460">Magnesium</keyword>
<keyword id="KW-0479">Metal-binding</keyword>
<keyword id="KW-0524">Neurogenesis</keyword>
<keyword id="KW-0547">Nucleotide-binding</keyword>
<keyword id="KW-1185">Reference proteome</keyword>
<keyword id="KW-0723">Serine/threonine-protein kinase</keyword>
<keyword id="KW-0770">Synapse</keyword>
<keyword id="KW-0808">Transferase</keyword>
<protein>
    <recommendedName>
        <fullName evidence="12">Serine/threonine kinase SAD-1</fullName>
        <ecNumber>2.7.11.1</ecNumber>
    </recommendedName>
    <alternativeName>
        <fullName evidence="9">Synapses of Amphids Defective</fullName>
    </alternativeName>
</protein>
<feature type="chain" id="PRO_0000397233" description="Serine/threonine kinase SAD-1">
    <location>
        <begin position="1"/>
        <end position="914"/>
    </location>
</feature>
<feature type="domain" description="Protein kinase" evidence="2">
    <location>
        <begin position="47"/>
        <end position="298"/>
    </location>
</feature>
<feature type="region of interest" description="Disordered" evidence="4">
    <location>
        <begin position="375"/>
        <end position="551"/>
    </location>
</feature>
<feature type="region of interest" description="Disordered" evidence="4">
    <location>
        <begin position="563"/>
        <end position="590"/>
    </location>
</feature>
<feature type="region of interest" description="Disordered" evidence="4">
    <location>
        <begin position="757"/>
        <end position="914"/>
    </location>
</feature>
<feature type="compositionally biased region" description="Basic and acidic residues" evidence="4">
    <location>
        <begin position="393"/>
        <end position="402"/>
    </location>
</feature>
<feature type="compositionally biased region" description="Low complexity" evidence="4">
    <location>
        <begin position="444"/>
        <end position="462"/>
    </location>
</feature>
<feature type="compositionally biased region" description="Polar residues" evidence="4">
    <location>
        <begin position="473"/>
        <end position="482"/>
    </location>
</feature>
<feature type="compositionally biased region" description="Basic and acidic residues" evidence="4">
    <location>
        <begin position="495"/>
        <end position="526"/>
    </location>
</feature>
<feature type="compositionally biased region" description="Low complexity" evidence="4">
    <location>
        <begin position="527"/>
        <end position="551"/>
    </location>
</feature>
<feature type="compositionally biased region" description="Low complexity" evidence="4">
    <location>
        <begin position="563"/>
        <end position="573"/>
    </location>
</feature>
<feature type="compositionally biased region" description="Polar residues" evidence="4">
    <location>
        <begin position="574"/>
        <end position="590"/>
    </location>
</feature>
<feature type="compositionally biased region" description="Low complexity" evidence="4">
    <location>
        <begin position="780"/>
        <end position="796"/>
    </location>
</feature>
<feature type="compositionally biased region" description="Polar residues" evidence="4">
    <location>
        <begin position="823"/>
        <end position="837"/>
    </location>
</feature>
<feature type="compositionally biased region" description="Low complexity" evidence="4">
    <location>
        <begin position="850"/>
        <end position="876"/>
    </location>
</feature>
<feature type="compositionally biased region" description="Polar residues" evidence="4">
    <location>
        <begin position="882"/>
        <end position="903"/>
    </location>
</feature>
<feature type="active site" description="Proton acceptor" evidence="1 2 3">
    <location>
        <position position="169"/>
    </location>
</feature>
<feature type="binding site" evidence="1 2">
    <location>
        <begin position="53"/>
        <end position="61"/>
    </location>
    <ligand>
        <name>ATP</name>
        <dbReference type="ChEBI" id="CHEBI:30616"/>
    </ligand>
</feature>
<feature type="binding site" evidence="1 2">
    <location>
        <position position="76"/>
    </location>
    <ligand>
        <name>ATP</name>
        <dbReference type="ChEBI" id="CHEBI:30616"/>
    </ligand>
</feature>
<feature type="splice variant" id="VSP_039684" description="In isoform b." evidence="9 10">
    <original>ANSY</original>
    <variation>GITS</variation>
    <location>
        <begin position="832"/>
        <end position="835"/>
    </location>
</feature>
<feature type="splice variant" id="VSP_039685" description="In isoform b." evidence="9 10">
    <location>
        <begin position="836"/>
        <end position="914"/>
    </location>
</feature>
<organism>
    <name type="scientific">Caenorhabditis elegans</name>
    <dbReference type="NCBI Taxonomy" id="6239"/>
    <lineage>
        <taxon>Eukaryota</taxon>
        <taxon>Metazoa</taxon>
        <taxon>Ecdysozoa</taxon>
        <taxon>Nematoda</taxon>
        <taxon>Chromadorea</taxon>
        <taxon>Rhabditida</taxon>
        <taxon>Rhabditina</taxon>
        <taxon>Rhabditomorpha</taxon>
        <taxon>Rhabditoidea</taxon>
        <taxon>Rhabditidae</taxon>
        <taxon>Peloderinae</taxon>
        <taxon>Caenorhabditis</taxon>
    </lineage>
</organism>
<evidence type="ECO:0000250" key="1">
    <source>
        <dbReference type="UniProtKB" id="P28523"/>
    </source>
</evidence>
<evidence type="ECO:0000255" key="2">
    <source>
        <dbReference type="PROSITE-ProRule" id="PRU00159"/>
    </source>
</evidence>
<evidence type="ECO:0000255" key="3">
    <source>
        <dbReference type="PROSITE-ProRule" id="PRU10027"/>
    </source>
</evidence>
<evidence type="ECO:0000256" key="4">
    <source>
        <dbReference type="SAM" id="MobiDB-lite"/>
    </source>
</evidence>
<evidence type="ECO:0000269" key="5">
    <source>
    </source>
</evidence>
<evidence type="ECO:0000269" key="6">
    <source>
    </source>
</evidence>
<evidence type="ECO:0000269" key="7">
    <source>
    </source>
</evidence>
<evidence type="ECO:0000269" key="8">
    <source>
    </source>
</evidence>
<evidence type="ECO:0000303" key="9">
    <source>
    </source>
</evidence>
<evidence type="ECO:0000303" key="10">
    <source>
    </source>
</evidence>
<evidence type="ECO:0000305" key="11"/>
<evidence type="ECO:0000312" key="12">
    <source>
        <dbReference type="EMBL" id="AAG50270.1"/>
    </source>
</evidence>
<evidence type="ECO:0000312" key="13">
    <source>
        <dbReference type="EMBL" id="CAA94127.2"/>
    </source>
</evidence>
<evidence type="ECO:0000312" key="14">
    <source>
        <dbReference type="WormBase" id="F15A2.6a"/>
    </source>
</evidence>
<proteinExistence type="evidence at protein level"/>